<organism>
    <name type="scientific">Plasmodium falciparum (isolate fcm17 / Senegal)</name>
    <dbReference type="NCBI Taxonomy" id="5845"/>
    <lineage>
        <taxon>Eukaryota</taxon>
        <taxon>Sar</taxon>
        <taxon>Alveolata</taxon>
        <taxon>Apicomplexa</taxon>
        <taxon>Aconoidasida</taxon>
        <taxon>Haemosporida</taxon>
        <taxon>Plasmodiidae</taxon>
        <taxon>Plasmodium</taxon>
        <taxon>Plasmodium (Laverania)</taxon>
    </lineage>
</organism>
<comment type="miscellaneous">
    <text>This protein is coded on the reverse strand of an aspartic acid-rich protein.</text>
</comment>
<proteinExistence type="predicted"/>
<sequence>MLNHRYHHYFHRHHHLNHHLYHRHHHHRHHHHRHHHRHQILHQNRHQIHQILLSLNNKIMGYAIFLFLSILLHLVYLVIHRL</sequence>
<keyword id="KW-0461">Malaria</keyword>
<protein>
    <recommendedName>
        <fullName>Histidine-rich protein</fullName>
    </recommendedName>
</protein>
<dbReference type="EMBL" id="M17028">
    <property type="protein sequence ID" value="AAA29619.1"/>
    <property type="molecule type" value="Genomic_DNA"/>
</dbReference>
<dbReference type="PIR" id="A29653">
    <property type="entry name" value="A29653"/>
</dbReference>
<dbReference type="SMR" id="P14586"/>
<reference key="1">
    <citation type="journal article" date="1987" name="Biochem. Biophys. Res. Commun.">
        <title>Cloning and sequencing of Plasmodium falciparum DNA fragments containing repetitive regions potentially coding for histidine-rich proteins: identification of two overlapping reading frames.</title>
        <authorList>
            <person name="Lenstra R."/>
            <person name="D'Auriol L."/>
            <person name="Andrieu B."/>
            <person name="le Bras J."/>
            <person name="Galibert F."/>
        </authorList>
    </citation>
    <scope>NUCLEOTIDE SEQUENCE [GENOMIC DNA]</scope>
</reference>
<name>HRP3_PLAFS</name>
<accession>P14586</accession>
<feature type="chain" id="PRO_0000217188" description="Histidine-rich protein">
    <location>
        <begin position="1"/>
        <end position="82"/>
    </location>
</feature>